<proteinExistence type="inferred from homology"/>
<evidence type="ECO:0000255" key="1">
    <source>
        <dbReference type="HAMAP-Rule" id="MF_01092"/>
    </source>
</evidence>
<protein>
    <recommendedName>
        <fullName evidence="1">Cell division protein ZapD</fullName>
    </recommendedName>
    <alternativeName>
        <fullName evidence="1">Z ring-associated protein D</fullName>
    </alternativeName>
</protein>
<sequence length="252" mass="28828">MILYEYPFNERIRTLLRLEDLFDRLDYFLGQEHPLQHHVALTTLFEIIDVAGRADLKTDLIKELERQRQALTALRVNPQIDQEALDAIIGEIEQGIAMLNQTVGKAGQLLTDNEWLTSIRSRAIIPGGTCEFDLPAYYAWQHRPAEERRADILKWARPLVALRAGTSTVLRLLRESGQSGKVIATGGSYQQMLSGRSYQLMQVHLDDSLLAFIPEMSANKYMLWVRFTQQDGDLRPRSVDADIPFLLKLCNF</sequence>
<dbReference type="EMBL" id="CP000090">
    <property type="protein sequence ID" value="AAZ62324.1"/>
    <property type="molecule type" value="Genomic_DNA"/>
</dbReference>
<dbReference type="SMR" id="Q46X09"/>
<dbReference type="STRING" id="264198.Reut_A2964"/>
<dbReference type="KEGG" id="reu:Reut_A2964"/>
<dbReference type="eggNOG" id="COG4582">
    <property type="taxonomic scope" value="Bacteria"/>
</dbReference>
<dbReference type="HOGENOM" id="CLU_076303_0_1_4"/>
<dbReference type="OrthoDB" id="5294622at2"/>
<dbReference type="GO" id="GO:0032153">
    <property type="term" value="C:cell division site"/>
    <property type="evidence" value="ECO:0007669"/>
    <property type="project" value="TreeGrafter"/>
</dbReference>
<dbReference type="GO" id="GO:0005737">
    <property type="term" value="C:cytoplasm"/>
    <property type="evidence" value="ECO:0007669"/>
    <property type="project" value="UniProtKB-SubCell"/>
</dbReference>
<dbReference type="GO" id="GO:0000917">
    <property type="term" value="P:division septum assembly"/>
    <property type="evidence" value="ECO:0007669"/>
    <property type="project" value="UniProtKB-KW"/>
</dbReference>
<dbReference type="GO" id="GO:0043093">
    <property type="term" value="P:FtsZ-dependent cytokinesis"/>
    <property type="evidence" value="ECO:0007669"/>
    <property type="project" value="UniProtKB-UniRule"/>
</dbReference>
<dbReference type="Gene3D" id="1.10.3900.10">
    <property type="entry name" value="YacF-like"/>
    <property type="match status" value="1"/>
</dbReference>
<dbReference type="Gene3D" id="2.60.440.10">
    <property type="entry name" value="YacF-like domains"/>
    <property type="match status" value="1"/>
</dbReference>
<dbReference type="HAMAP" id="MF_01092">
    <property type="entry name" value="ZapD"/>
    <property type="match status" value="1"/>
</dbReference>
<dbReference type="InterPro" id="IPR009777">
    <property type="entry name" value="ZapD"/>
</dbReference>
<dbReference type="InterPro" id="IPR027462">
    <property type="entry name" value="ZapD_C"/>
</dbReference>
<dbReference type="InterPro" id="IPR036268">
    <property type="entry name" value="ZapD_sf"/>
</dbReference>
<dbReference type="NCBIfam" id="NF003656">
    <property type="entry name" value="PRK05287.1-4"/>
    <property type="match status" value="1"/>
</dbReference>
<dbReference type="PANTHER" id="PTHR39455">
    <property type="entry name" value="CELL DIVISION PROTEIN ZAPD"/>
    <property type="match status" value="1"/>
</dbReference>
<dbReference type="PANTHER" id="PTHR39455:SF1">
    <property type="entry name" value="CELL DIVISION PROTEIN ZAPD"/>
    <property type="match status" value="1"/>
</dbReference>
<dbReference type="Pfam" id="PF07072">
    <property type="entry name" value="ZapD"/>
    <property type="match status" value="1"/>
</dbReference>
<dbReference type="SUPFAM" id="SSF160950">
    <property type="entry name" value="YacF-like"/>
    <property type="match status" value="1"/>
</dbReference>
<comment type="function">
    <text evidence="1">Cell division factor that enhances FtsZ-ring assembly. Directly interacts with FtsZ and promotes bundling of FtsZ protofilaments, with a reduction in FtsZ GTPase activity.</text>
</comment>
<comment type="subunit">
    <text evidence="1">Interacts with FtsZ.</text>
</comment>
<comment type="subcellular location">
    <subcellularLocation>
        <location evidence="1">Cytoplasm</location>
    </subcellularLocation>
    <text evidence="1">Localizes to mid-cell in an FtsZ-dependent manner.</text>
</comment>
<comment type="similarity">
    <text evidence="1">Belongs to the ZapD family.</text>
</comment>
<feature type="chain" id="PRO_1000064917" description="Cell division protein ZapD">
    <location>
        <begin position="1"/>
        <end position="252"/>
    </location>
</feature>
<organism>
    <name type="scientific">Cupriavidus pinatubonensis (strain JMP 134 / LMG 1197)</name>
    <name type="common">Cupriavidus necator (strain JMP 134)</name>
    <dbReference type="NCBI Taxonomy" id="264198"/>
    <lineage>
        <taxon>Bacteria</taxon>
        <taxon>Pseudomonadati</taxon>
        <taxon>Pseudomonadota</taxon>
        <taxon>Betaproteobacteria</taxon>
        <taxon>Burkholderiales</taxon>
        <taxon>Burkholderiaceae</taxon>
        <taxon>Cupriavidus</taxon>
    </lineage>
</organism>
<reference key="1">
    <citation type="journal article" date="2010" name="PLoS ONE">
        <title>The complete multipartite genome sequence of Cupriavidus necator JMP134, a versatile pollutant degrader.</title>
        <authorList>
            <person name="Lykidis A."/>
            <person name="Perez-Pantoja D."/>
            <person name="Ledger T."/>
            <person name="Mavromatis K."/>
            <person name="Anderson I.J."/>
            <person name="Ivanova N.N."/>
            <person name="Hooper S.D."/>
            <person name="Lapidus A."/>
            <person name="Lucas S."/>
            <person name="Gonzalez B."/>
            <person name="Kyrpides N.C."/>
        </authorList>
    </citation>
    <scope>NUCLEOTIDE SEQUENCE [LARGE SCALE GENOMIC DNA]</scope>
    <source>
        <strain>JMP134 / LMG 1197</strain>
    </source>
</reference>
<accession>Q46X09</accession>
<keyword id="KW-0131">Cell cycle</keyword>
<keyword id="KW-0132">Cell division</keyword>
<keyword id="KW-0963">Cytoplasm</keyword>
<keyword id="KW-0717">Septation</keyword>
<gene>
    <name evidence="1" type="primary">zapD</name>
    <name type="ordered locus">Reut_A2964</name>
</gene>
<name>ZAPD_CUPPJ</name>